<organism>
    <name type="scientific">Arabidopsis thaliana</name>
    <name type="common">Mouse-ear cress</name>
    <dbReference type="NCBI Taxonomy" id="3702"/>
    <lineage>
        <taxon>Eukaryota</taxon>
        <taxon>Viridiplantae</taxon>
        <taxon>Streptophyta</taxon>
        <taxon>Embryophyta</taxon>
        <taxon>Tracheophyta</taxon>
        <taxon>Spermatophyta</taxon>
        <taxon>Magnoliopsida</taxon>
        <taxon>eudicotyledons</taxon>
        <taxon>Gunneridae</taxon>
        <taxon>Pentapetalae</taxon>
        <taxon>rosids</taxon>
        <taxon>malvids</taxon>
        <taxon>Brassicales</taxon>
        <taxon>Brassicaceae</taxon>
        <taxon>Camelineae</taxon>
        <taxon>Arabidopsis</taxon>
    </lineage>
</organism>
<evidence type="ECO:0000255" key="1"/>
<evidence type="ECO:0000269" key="2">
    <source>
    </source>
</evidence>
<evidence type="ECO:0000269" key="3">
    <source>
    </source>
</evidence>
<evidence type="ECO:0000269" key="4">
    <source>
    </source>
</evidence>
<evidence type="ECO:0000269" key="5">
    <source>
    </source>
</evidence>
<evidence type="ECO:0000303" key="6">
    <source>
    </source>
</evidence>
<evidence type="ECO:0000303" key="7">
    <source ref="4"/>
</evidence>
<evidence type="ECO:0000305" key="8"/>
<evidence type="ECO:0000312" key="9">
    <source>
        <dbReference type="Araport" id="AT2G13650"/>
    </source>
</evidence>
<evidence type="ECO:0000312" key="10">
    <source>
        <dbReference type="EMBL" id="AAD22687.2"/>
    </source>
</evidence>
<evidence type="ECO:0000312" key="11">
    <source>
        <dbReference type="EMBL" id="CAC69066.1"/>
    </source>
</evidence>
<proteinExistence type="evidence at protein level"/>
<comment type="function">
    <text evidence="2 3 4 5">Involved in the import of GDP-mannose from the cytoplasm into the Golgi lumen (PubMed:11595802, PubMed:20576760, PubMed:27381418). Required for the luminal synthesis of a variety of plant cell surface components (PubMed:11595802). Is required for the correct mannosylation of the glycosylinositol phosphoceramides (GIPC). Can indifferently transport GDP-mannose, GDP-Glucose, GDP-Fucose or GDP-Galactose in vitro (PubMed:23695979, PubMed:27381418).</text>
</comment>
<comment type="biophysicochemical properties">
    <kinetics>
        <KM evidence="5">76 uM for UDP-Fucose</KM>
        <KM evidence="5">17 uM for UDP-Mannose</KM>
        <Vmax evidence="5">14.0 nmol/sec/mg enzyme toward UDP-Fucose</Vmax>
        <Vmax evidence="5">24.0 nmol/sec/mg enzyme toward UDP-Mannose</Vmax>
    </kinetics>
</comment>
<comment type="subcellular location">
    <subcellularLocation>
        <location evidence="2 5">Golgi apparatus membrane</location>
        <topology evidence="1">Multi-pass membrane protein</topology>
    </subcellularLocation>
</comment>
<comment type="alternative products">
    <event type="alternative splicing"/>
    <isoform>
        <id>Q941R4-1</id>
        <name>1</name>
        <sequence type="displayed"/>
    </isoform>
    <isoform>
        <id>Q941R4-2</id>
        <name>2</name>
        <sequence type="described" ref="VSP_026061 VSP_026062"/>
    </isoform>
</comment>
<comment type="disruption phenotype">
    <text evidence="4">Dwarf phenotype, necrotic lesions and a constitutive hypersensitive response to salicylic acid induction.</text>
</comment>
<comment type="miscellaneous">
    <molecule>Isoform 2</molecule>
    <text evidence="8">May be due to intron retention.</text>
</comment>
<comment type="similarity">
    <text evidence="8">Belongs to the nucleotide-sugar transporter family. GDP-Mannose:GMP antiporter (GMA) (TC 2.A.7.13) subfamily.</text>
</comment>
<keyword id="KW-0025">Alternative splicing</keyword>
<keyword id="KW-0050">Antiport</keyword>
<keyword id="KW-0333">Golgi apparatus</keyword>
<keyword id="KW-0472">Membrane</keyword>
<keyword id="KW-1185">Reference proteome</keyword>
<keyword id="KW-0762">Sugar transport</keyword>
<keyword id="KW-0812">Transmembrane</keyword>
<keyword id="KW-1133">Transmembrane helix</keyword>
<keyword id="KW-0813">Transport</keyword>
<sequence length="333" mass="36840">MKLYEHDGVDLEDGKTVKSGGDKPIPRKIHNRALLSGLAYCISSCSMILVNKFVLSSYNFNAGIFLMLYQNFVSVIIVVGLSLMGLITTEPLTLRLMKVWFPVNVIFVGMLITSMFSLKYINVAMVTVLKNVTNVITAVGEMYLFNKQHDNRVWAALFLMIISAVSGGITDLSFNAVGYAWQIANCFLTASYSLTLRKTMDTAKQVTQSGNLNEFSMVLLNNTLSLPLGLLLSYFFNEMDYLYQTPLLRLPSFWMVMTLSGLLGLAISFTSMWFLHQTGATTYSLVGSLNKIPLSIAGIVLFNVPTSLQNSASILFGLVAGVVFARAKMREKS</sequence>
<dbReference type="EMBL" id="AJ314836">
    <property type="protein sequence ID" value="CAC69066.1"/>
    <property type="molecule type" value="mRNA"/>
</dbReference>
<dbReference type="EMBL" id="AC007063">
    <property type="protein sequence ID" value="AAD22687.2"/>
    <property type="molecule type" value="Genomic_DNA"/>
</dbReference>
<dbReference type="EMBL" id="CP002685">
    <property type="protein sequence ID" value="AEC06250.1"/>
    <property type="molecule type" value="Genomic_DNA"/>
</dbReference>
<dbReference type="EMBL" id="CP002685">
    <property type="protein sequence ID" value="AEC06251.1"/>
    <property type="molecule type" value="Genomic_DNA"/>
</dbReference>
<dbReference type="EMBL" id="CP002685">
    <property type="protein sequence ID" value="AEC06252.1"/>
    <property type="molecule type" value="Genomic_DNA"/>
</dbReference>
<dbReference type="EMBL" id="CP002685">
    <property type="protein sequence ID" value="ANM62847.1"/>
    <property type="molecule type" value="Genomic_DNA"/>
</dbReference>
<dbReference type="EMBL" id="BT030001">
    <property type="protein sequence ID" value="ABN04739.1"/>
    <property type="molecule type" value="mRNA"/>
</dbReference>
<dbReference type="PIR" id="E84509">
    <property type="entry name" value="E84509"/>
</dbReference>
<dbReference type="RefSeq" id="NP_001189524.1">
    <molecule id="Q941R4-1"/>
    <property type="nucleotide sequence ID" value="NM_001202595.1"/>
</dbReference>
<dbReference type="RefSeq" id="NP_001318219.1">
    <molecule id="Q941R4-2"/>
    <property type="nucleotide sequence ID" value="NM_001335395.1"/>
</dbReference>
<dbReference type="RefSeq" id="NP_565357.1">
    <molecule id="Q941R4-1"/>
    <property type="nucleotide sequence ID" value="NM_126944.5"/>
</dbReference>
<dbReference type="RefSeq" id="NP_849952.1">
    <molecule id="Q941R4-2"/>
    <property type="nucleotide sequence ID" value="NM_179621.3"/>
</dbReference>
<dbReference type="SMR" id="Q941R4"/>
<dbReference type="BioGRID" id="1211">
    <property type="interactions" value="29"/>
</dbReference>
<dbReference type="FunCoup" id="Q941R4">
    <property type="interactions" value="2111"/>
</dbReference>
<dbReference type="IntAct" id="Q941R4">
    <property type="interactions" value="1"/>
</dbReference>
<dbReference type="STRING" id="3702.Q941R4"/>
<dbReference type="TCDB" id="2.A.7.13.3">
    <property type="family name" value="the drug/metabolite transporter (dmt) superfamily"/>
</dbReference>
<dbReference type="PaxDb" id="3702-AT2G13650.1"/>
<dbReference type="ProteomicsDB" id="248444">
    <molecule id="Q941R4-1"/>
</dbReference>
<dbReference type="EnsemblPlants" id="AT2G13650.1">
    <molecule id="Q941R4-1"/>
    <property type="protein sequence ID" value="AT2G13650.1"/>
    <property type="gene ID" value="AT2G13650"/>
</dbReference>
<dbReference type="EnsemblPlants" id="AT2G13650.2">
    <molecule id="Q941R4-2"/>
    <property type="protein sequence ID" value="AT2G13650.2"/>
    <property type="gene ID" value="AT2G13650"/>
</dbReference>
<dbReference type="EnsemblPlants" id="AT2G13650.3">
    <molecule id="Q941R4-1"/>
    <property type="protein sequence ID" value="AT2G13650.3"/>
    <property type="gene ID" value="AT2G13650"/>
</dbReference>
<dbReference type="EnsemblPlants" id="AT2G13650.7">
    <molecule id="Q941R4-2"/>
    <property type="protein sequence ID" value="AT2G13650.7"/>
    <property type="gene ID" value="AT2G13650"/>
</dbReference>
<dbReference type="GeneID" id="815850"/>
<dbReference type="Gramene" id="AT2G13650.1">
    <molecule id="Q941R4-1"/>
    <property type="protein sequence ID" value="AT2G13650.1"/>
    <property type="gene ID" value="AT2G13650"/>
</dbReference>
<dbReference type="Gramene" id="AT2G13650.2">
    <molecule id="Q941R4-2"/>
    <property type="protein sequence ID" value="AT2G13650.2"/>
    <property type="gene ID" value="AT2G13650"/>
</dbReference>
<dbReference type="Gramene" id="AT2G13650.3">
    <molecule id="Q941R4-1"/>
    <property type="protein sequence ID" value="AT2G13650.3"/>
    <property type="gene ID" value="AT2G13650"/>
</dbReference>
<dbReference type="Gramene" id="AT2G13650.7">
    <molecule id="Q941R4-2"/>
    <property type="protein sequence ID" value="AT2G13650.7"/>
    <property type="gene ID" value="AT2G13650"/>
</dbReference>
<dbReference type="KEGG" id="ath:AT2G13650"/>
<dbReference type="Araport" id="AT2G13650"/>
<dbReference type="TAIR" id="AT2G13650">
    <property type="gene designation" value="GONST1"/>
</dbReference>
<dbReference type="eggNOG" id="KOG1444">
    <property type="taxonomic scope" value="Eukaryota"/>
</dbReference>
<dbReference type="HOGENOM" id="CLU_025360_0_1_1"/>
<dbReference type="InParanoid" id="Q941R4"/>
<dbReference type="OMA" id="WCIRKTS"/>
<dbReference type="PhylomeDB" id="Q941R4"/>
<dbReference type="PRO" id="PR:Q941R4"/>
<dbReference type="Proteomes" id="UP000006548">
    <property type="component" value="Chromosome 2"/>
</dbReference>
<dbReference type="ExpressionAtlas" id="Q941R4">
    <property type="expression patterns" value="baseline and differential"/>
</dbReference>
<dbReference type="GO" id="GO:0005794">
    <property type="term" value="C:Golgi apparatus"/>
    <property type="evidence" value="ECO:0000314"/>
    <property type="project" value="TAIR"/>
</dbReference>
<dbReference type="GO" id="GO:0000139">
    <property type="term" value="C:Golgi membrane"/>
    <property type="evidence" value="ECO:0007669"/>
    <property type="project" value="UniProtKB-SubCell"/>
</dbReference>
<dbReference type="GO" id="GO:0015297">
    <property type="term" value="F:antiporter activity"/>
    <property type="evidence" value="ECO:0007669"/>
    <property type="project" value="UniProtKB-KW"/>
</dbReference>
<dbReference type="GO" id="GO:0005457">
    <property type="term" value="F:GDP-fucose transmembrane transporter activity"/>
    <property type="evidence" value="ECO:0000314"/>
    <property type="project" value="UniProtKB"/>
</dbReference>
<dbReference type="GO" id="GO:0005458">
    <property type="term" value="F:GDP-mannose transmembrane transporter activity"/>
    <property type="evidence" value="ECO:0000314"/>
    <property type="project" value="UniProtKB"/>
</dbReference>
<dbReference type="GO" id="GO:0005338">
    <property type="term" value="F:nucleotide-sugar transmembrane transporter activity"/>
    <property type="evidence" value="ECO:0000250"/>
    <property type="project" value="TAIR"/>
</dbReference>
<dbReference type="GO" id="GO:0006952">
    <property type="term" value="P:defense response"/>
    <property type="evidence" value="ECO:0000270"/>
    <property type="project" value="TAIR"/>
</dbReference>
<dbReference type="GO" id="GO:0015783">
    <property type="term" value="P:GDP-fucose transmembrane transport"/>
    <property type="evidence" value="ECO:0000314"/>
    <property type="project" value="UniProtKB"/>
</dbReference>
<dbReference type="GO" id="GO:1990570">
    <property type="term" value="P:GDP-mannose transmembrane transport"/>
    <property type="evidence" value="ECO:0000314"/>
    <property type="project" value="UniProtKB"/>
</dbReference>
<dbReference type="InterPro" id="IPR004853">
    <property type="entry name" value="Sugar_P_trans_dom"/>
</dbReference>
<dbReference type="InterPro" id="IPR050186">
    <property type="entry name" value="TPT_transporter"/>
</dbReference>
<dbReference type="PANTHER" id="PTHR11132">
    <property type="entry name" value="SOLUTE CARRIER FAMILY 35"/>
    <property type="match status" value="1"/>
</dbReference>
<dbReference type="Pfam" id="PF03151">
    <property type="entry name" value="TPT"/>
    <property type="match status" value="1"/>
</dbReference>
<protein>
    <recommendedName>
        <fullName evidence="6">GDP-mannose transporter GONST1</fullName>
    </recommendedName>
    <alternativeName>
        <fullName evidence="6">Protein GOLGI NUCLEOTIDE SUGAR TRANSPORTER 1</fullName>
    </alternativeName>
</protein>
<feature type="chain" id="PRO_0000213397" description="GDP-mannose transporter GONST1">
    <location>
        <begin position="1"/>
        <end position="333"/>
    </location>
</feature>
<feature type="transmembrane region" description="Helical" evidence="1">
    <location>
        <begin position="33"/>
        <end position="55"/>
    </location>
</feature>
<feature type="transmembrane region" description="Helical" evidence="1">
    <location>
        <begin position="62"/>
        <end position="84"/>
    </location>
</feature>
<feature type="transmembrane region" description="Helical" evidence="1">
    <location>
        <begin position="99"/>
        <end position="121"/>
    </location>
</feature>
<feature type="transmembrane region" description="Helical" evidence="1">
    <location>
        <begin position="153"/>
        <end position="170"/>
    </location>
</feature>
<feature type="transmembrane region" description="Helical" evidence="1">
    <location>
        <begin position="174"/>
        <end position="196"/>
    </location>
</feature>
<feature type="transmembrane region" description="Helical" evidence="1">
    <location>
        <begin position="216"/>
        <end position="238"/>
    </location>
</feature>
<feature type="transmembrane region" description="Helical" evidence="1">
    <location>
        <begin position="253"/>
        <end position="275"/>
    </location>
</feature>
<feature type="transmembrane region" description="Helical" evidence="1">
    <location>
        <begin position="282"/>
        <end position="304"/>
    </location>
</feature>
<feature type="transmembrane region" description="Helical" evidence="1">
    <location>
        <begin position="308"/>
        <end position="325"/>
    </location>
</feature>
<feature type="splice variant" id="VSP_026061" description="In isoform 2." evidence="7">
    <original>S</original>
    <variation>R</variation>
    <location>
        <position position="284"/>
    </location>
</feature>
<feature type="splice variant" id="VSP_026062" description="In isoform 2." evidence="7">
    <location>
        <begin position="285"/>
        <end position="333"/>
    </location>
</feature>
<feature type="sequence conflict" description="In Ref. 1; CAC69066." evidence="8" ref="1">
    <original>V</original>
    <variation>L</variation>
    <location>
        <position position="17"/>
    </location>
</feature>
<accession>Q941R4</accession>
<accession>Q3EC15</accession>
<accession>Q9SIT2</accession>
<reference key="1">
    <citation type="journal article" date="2001" name="Plant Cell">
        <title>Identification and characterization of GONST1, a Golgi-localized GDP-mannose transporter in Arabidopsis.</title>
        <authorList>
            <person name="Baldwin T.C."/>
            <person name="Handford M.G."/>
            <person name="Yuseff M.I."/>
            <person name="Orellana A."/>
            <person name="Dupree P."/>
        </authorList>
    </citation>
    <scope>NUCLEOTIDE SEQUENCE [MRNA] (ISOFORM 1)</scope>
    <scope>FUNCTION</scope>
    <scope>SUBCELLULAR LOCATION</scope>
</reference>
<reference key="2">
    <citation type="journal article" date="1999" name="Nature">
        <title>Sequence and analysis of chromosome 2 of the plant Arabidopsis thaliana.</title>
        <authorList>
            <person name="Lin X."/>
            <person name="Kaul S."/>
            <person name="Rounsley S.D."/>
            <person name="Shea T.P."/>
            <person name="Benito M.-I."/>
            <person name="Town C.D."/>
            <person name="Fujii C.Y."/>
            <person name="Mason T.M."/>
            <person name="Bowman C.L."/>
            <person name="Barnstead M.E."/>
            <person name="Feldblyum T.V."/>
            <person name="Buell C.R."/>
            <person name="Ketchum K.A."/>
            <person name="Lee J.J."/>
            <person name="Ronning C.M."/>
            <person name="Koo H.L."/>
            <person name="Moffat K.S."/>
            <person name="Cronin L.A."/>
            <person name="Shen M."/>
            <person name="Pai G."/>
            <person name="Van Aken S."/>
            <person name="Umayam L."/>
            <person name="Tallon L.J."/>
            <person name="Gill J.E."/>
            <person name="Adams M.D."/>
            <person name="Carrera A.J."/>
            <person name="Creasy T.H."/>
            <person name="Goodman H.M."/>
            <person name="Somerville C.R."/>
            <person name="Copenhaver G.P."/>
            <person name="Preuss D."/>
            <person name="Nierman W.C."/>
            <person name="White O."/>
            <person name="Eisen J.A."/>
            <person name="Salzberg S.L."/>
            <person name="Fraser C.M."/>
            <person name="Venter J.C."/>
        </authorList>
    </citation>
    <scope>NUCLEOTIDE SEQUENCE [LARGE SCALE GENOMIC DNA]</scope>
    <source>
        <strain>cv. Columbia</strain>
    </source>
</reference>
<reference key="3">
    <citation type="journal article" date="2017" name="Plant J.">
        <title>Araport11: a complete reannotation of the Arabidopsis thaliana reference genome.</title>
        <authorList>
            <person name="Cheng C.Y."/>
            <person name="Krishnakumar V."/>
            <person name="Chan A.P."/>
            <person name="Thibaud-Nissen F."/>
            <person name="Schobel S."/>
            <person name="Town C.D."/>
        </authorList>
    </citation>
    <scope>GENOME REANNOTATION</scope>
    <source>
        <strain>cv. Columbia</strain>
    </source>
</reference>
<reference key="4">
    <citation type="submission" date="2007-01" db="EMBL/GenBank/DDBJ databases">
        <title>Arabidopsis ORF clones.</title>
        <authorList>
            <person name="Bautista V.R."/>
            <person name="Kim C.J."/>
            <person name="Chen H."/>
            <person name="Wu S.Y."/>
            <person name="De Los Reyes C."/>
            <person name="Ecker J.R."/>
        </authorList>
    </citation>
    <scope>NUCLEOTIDE SEQUENCE [LARGE SCALE MRNA] (ISOFORM 2)</scope>
    <source>
        <strain>cv. Columbia</strain>
    </source>
</reference>
<reference key="5">
    <citation type="journal article" date="2010" name="Mol. Biol. Evol.">
        <title>Phylogenetic and biochemical evidence supports the recruitment of an ADP-glucose translocator for the export of photosynthate during plastid endosymbiosis.</title>
        <authorList>
            <person name="Colleoni C."/>
            <person name="Linka M."/>
            <person name="Deschamps P."/>
            <person name="Handford M.G."/>
            <person name="Dupree P."/>
            <person name="Weber A.P."/>
            <person name="Ball S.G."/>
        </authorList>
    </citation>
    <scope>FUNCTION</scope>
</reference>
<reference key="6">
    <citation type="journal article" date="2013" name="Plant Cell">
        <title>Abnormal glycosphingolipid mannosylation triggers salicylic acid-mediated responses in Arabidopsis.</title>
        <authorList>
            <person name="Mortimer J.C."/>
            <person name="Yu X."/>
            <person name="Albrecht S."/>
            <person name="Sicilia F."/>
            <person name="Huichalaf M."/>
            <person name="Ampuero D."/>
            <person name="Michaelson L.V."/>
            <person name="Murphy A.M."/>
            <person name="Matsunaga T."/>
            <person name="Kurz S."/>
            <person name="Stephens E."/>
            <person name="Baldwin T.C."/>
            <person name="Ishii T."/>
            <person name="Napier J.A."/>
            <person name="Weber A.P."/>
            <person name="Handford M.G."/>
            <person name="Dupree P."/>
        </authorList>
    </citation>
    <scope>FUNCTION</scope>
    <scope>DISRUPTION PHENOTYPE</scope>
</reference>
<reference key="7">
    <citation type="journal article" date="2014" name="Proc. Natl. Acad. Sci. U.S.A.">
        <title>The Golgi localized bifunctional UDP-rhamnose/UDP-galactose transporter family of Arabidopsis.</title>
        <authorList>
            <person name="Rautengarten C."/>
            <person name="Ebert B."/>
            <person name="Moreno I."/>
            <person name="Temple H."/>
            <person name="Herter T."/>
            <person name="Link B."/>
            <person name="Donas-Cofre D."/>
            <person name="Moreno A."/>
            <person name="Saez-Aguayo S."/>
            <person name="Blanco F."/>
            <person name="Mortimer J.C."/>
            <person name="Schultink A."/>
            <person name="Reiter W.D."/>
            <person name="Dupree P."/>
            <person name="Pauly M."/>
            <person name="Heazlewood J.L."/>
            <person name="Scheller H.V."/>
            <person name="Orellana A."/>
        </authorList>
    </citation>
    <scope>GENE FAMILY</scope>
</reference>
<reference key="8">
    <citation type="journal article" date="2016" name="Nat. Commun.">
        <title>The Arabidopsis Golgi-localized GDP-L-fucose transporter is required for plant development.</title>
        <authorList>
            <person name="Rautengarten C."/>
            <person name="Ebert B."/>
            <person name="Liu L."/>
            <person name="Stonebloom S."/>
            <person name="Smith-Moritz A.M."/>
            <person name="Pauly M."/>
            <person name="Orellana A."/>
            <person name="Scheller H.V."/>
            <person name="Heazlewood J.L."/>
        </authorList>
    </citation>
    <scope>SUBCELLULAR LOCATION</scope>
    <scope>FUNCTION</scope>
    <scope>BIOPHYSICOCHEMICAL PROPERTIES</scope>
</reference>
<name>GONS1_ARATH</name>
<gene>
    <name evidence="11" type="primary">GONST1</name>
    <name evidence="9" type="ordered locus">At2g13650</name>
    <name evidence="10" type="ORF">T10F5.19</name>
</gene>